<proteinExistence type="inferred from homology"/>
<keyword id="KW-0067">ATP-binding</keyword>
<keyword id="KW-0119">Carbohydrate metabolism</keyword>
<keyword id="KW-0418">Kinase</keyword>
<keyword id="KW-0460">Magnesium</keyword>
<keyword id="KW-0479">Metal-binding</keyword>
<keyword id="KW-0511">Multifunctional enzyme</keyword>
<keyword id="KW-0547">Nucleotide-binding</keyword>
<keyword id="KW-0723">Serine/threonine-protein kinase</keyword>
<keyword id="KW-0808">Transferase</keyword>
<feature type="chain" id="PRO_1000067147" description="HPr kinase/phosphorylase">
    <location>
        <begin position="1"/>
        <end position="307"/>
    </location>
</feature>
<feature type="region of interest" description="Important for the catalytic mechanism of both phosphorylation and dephosphorylation" evidence="1">
    <location>
        <begin position="198"/>
        <end position="207"/>
    </location>
</feature>
<feature type="region of interest" description="Important for the catalytic mechanism of dephosphorylation" evidence="1">
    <location>
        <begin position="261"/>
        <end position="266"/>
    </location>
</feature>
<feature type="active site" evidence="1">
    <location>
        <position position="136"/>
    </location>
</feature>
<feature type="active site" evidence="1">
    <location>
        <position position="157"/>
    </location>
</feature>
<feature type="active site" description="Proton acceptor; for phosphorylation activity. Proton donor; for dephosphorylation activity" evidence="1">
    <location>
        <position position="175"/>
    </location>
</feature>
<feature type="active site" evidence="1">
    <location>
        <position position="240"/>
    </location>
</feature>
<feature type="binding site" evidence="1">
    <location>
        <begin position="151"/>
        <end position="158"/>
    </location>
    <ligand>
        <name>ATP</name>
        <dbReference type="ChEBI" id="CHEBI:30616"/>
    </ligand>
</feature>
<feature type="binding site" evidence="1">
    <location>
        <position position="158"/>
    </location>
    <ligand>
        <name>Mg(2+)</name>
        <dbReference type="ChEBI" id="CHEBI:18420"/>
    </ligand>
</feature>
<feature type="binding site" evidence="1">
    <location>
        <position position="199"/>
    </location>
    <ligand>
        <name>Mg(2+)</name>
        <dbReference type="ChEBI" id="CHEBI:18420"/>
    </ligand>
</feature>
<comment type="function">
    <text evidence="1">Catalyzes the ATP- as well as the pyrophosphate-dependent phosphorylation of a specific serine residue in HPr, a phosphocarrier protein of the phosphoenolpyruvate-dependent sugar phosphotransferase system (PTS). HprK/P also catalyzes the pyrophosphate-producing, inorganic phosphate-dependent dephosphorylation (phosphorolysis) of seryl-phosphorylated HPr (P-Ser-HPr). The two antagonistic activities of HprK/P are regulated by several intracellular metabolites, which change their concentration in response to the absence or presence of rapidly metabolisable carbon sources (glucose, fructose, etc.) in the growth medium. Therefore, by controlling the phosphorylation state of HPr, HPrK/P is a sensor enzyme that plays a major role in the regulation of carbon metabolism and sugar transport: it mediates carbon catabolite repression (CCR), and regulates PTS-catalyzed carbohydrate uptake and inducer exclusion.</text>
</comment>
<comment type="catalytic activity">
    <reaction evidence="1">
        <text>[HPr protein]-L-serine + ATP = [HPr protein]-O-phospho-L-serine + ADP + H(+)</text>
        <dbReference type="Rhea" id="RHEA:46600"/>
        <dbReference type="Rhea" id="RHEA-COMP:11602"/>
        <dbReference type="Rhea" id="RHEA-COMP:11603"/>
        <dbReference type="ChEBI" id="CHEBI:15378"/>
        <dbReference type="ChEBI" id="CHEBI:29999"/>
        <dbReference type="ChEBI" id="CHEBI:30616"/>
        <dbReference type="ChEBI" id="CHEBI:83421"/>
        <dbReference type="ChEBI" id="CHEBI:456216"/>
    </reaction>
</comment>
<comment type="catalytic activity">
    <reaction evidence="1">
        <text>[HPr protein]-O-phospho-L-serine + phosphate + H(+) = [HPr protein]-L-serine + diphosphate</text>
        <dbReference type="Rhea" id="RHEA:46604"/>
        <dbReference type="Rhea" id="RHEA-COMP:11602"/>
        <dbReference type="Rhea" id="RHEA-COMP:11603"/>
        <dbReference type="ChEBI" id="CHEBI:15378"/>
        <dbReference type="ChEBI" id="CHEBI:29999"/>
        <dbReference type="ChEBI" id="CHEBI:33019"/>
        <dbReference type="ChEBI" id="CHEBI:43474"/>
        <dbReference type="ChEBI" id="CHEBI:83421"/>
    </reaction>
</comment>
<comment type="cofactor">
    <cofactor evidence="1">
        <name>Mg(2+)</name>
        <dbReference type="ChEBI" id="CHEBI:18420"/>
    </cofactor>
</comment>
<comment type="subunit">
    <text evidence="1">Homohexamer.</text>
</comment>
<comment type="domain">
    <text evidence="1">The Walker A ATP-binding motif also binds Pi and PPi.</text>
</comment>
<comment type="miscellaneous">
    <text evidence="1">Both phosphorylation and phosphorolysis are carried out by the same active site and suggest a common mechanism for both reactions.</text>
</comment>
<comment type="similarity">
    <text evidence="1">Belongs to the HPrK/P family.</text>
</comment>
<reference key="1">
    <citation type="journal article" date="2006" name="Genome Res.">
        <title>Skewed genomic variability in strains of the toxigenic bacterial pathogen, Clostridium perfringens.</title>
        <authorList>
            <person name="Myers G.S.A."/>
            <person name="Rasko D.A."/>
            <person name="Cheung J.K."/>
            <person name="Ravel J."/>
            <person name="Seshadri R."/>
            <person name="DeBoy R.T."/>
            <person name="Ren Q."/>
            <person name="Varga J."/>
            <person name="Awad M.M."/>
            <person name="Brinkac L.M."/>
            <person name="Daugherty S.C."/>
            <person name="Haft D.H."/>
            <person name="Dodson R.J."/>
            <person name="Madupu R."/>
            <person name="Nelson W.C."/>
            <person name="Rosovitz M.J."/>
            <person name="Sullivan S.A."/>
            <person name="Khouri H."/>
            <person name="Dimitrov G.I."/>
            <person name="Watkins K.L."/>
            <person name="Mulligan S."/>
            <person name="Benton J."/>
            <person name="Radune D."/>
            <person name="Fisher D.J."/>
            <person name="Atkins H.S."/>
            <person name="Hiscox T."/>
            <person name="Jost B.H."/>
            <person name="Billington S.J."/>
            <person name="Songer J.G."/>
            <person name="McClane B.A."/>
            <person name="Titball R.W."/>
            <person name="Rood J.I."/>
            <person name="Melville S.B."/>
            <person name="Paulsen I.T."/>
        </authorList>
    </citation>
    <scope>NUCLEOTIDE SEQUENCE [LARGE SCALE GENOMIC DNA]</scope>
    <source>
        <strain>SM101 / Type A</strain>
    </source>
</reference>
<accession>Q0SU11</accession>
<sequence>MGVTIEKLIKDFSLEVIQTGEENVPINVSDVNRPGLQLAGFYNYFAPERIQVIGKAEWSFLEDMSPDLRKKRLNKFFSFDISCLIITRGLEIHEELLKAARKRNLWILRSDMVTTKFISKITMYLSDKMAPETRLHGVLVDVYGIGMLITGESGIGKSETALELIKRGHRLVTDDAVDIKEIDGDLIGRSPEITFGMLEVRGMGIIDVSALYGLSSILNSKQIKIIIHFEHWKDDGDYDRLGVNDEYQDILGVKVKKLRVPIRPGRNIAVIIEAAAANYRYQRMSDISPVDIIEKRMLESMEKESKI</sequence>
<dbReference type="EC" id="2.7.11.-" evidence="1"/>
<dbReference type="EC" id="2.7.4.-" evidence="1"/>
<dbReference type="EMBL" id="CP000312">
    <property type="protein sequence ID" value="ABG86830.1"/>
    <property type="molecule type" value="Genomic_DNA"/>
</dbReference>
<dbReference type="RefSeq" id="WP_003448672.1">
    <property type="nucleotide sequence ID" value="NZ_CAXVKH010000027.1"/>
</dbReference>
<dbReference type="SMR" id="Q0SU11"/>
<dbReference type="GeneID" id="93002464"/>
<dbReference type="KEGG" id="cpr:CPR_1074"/>
<dbReference type="Proteomes" id="UP000001824">
    <property type="component" value="Chromosome"/>
</dbReference>
<dbReference type="GO" id="GO:0005524">
    <property type="term" value="F:ATP binding"/>
    <property type="evidence" value="ECO:0007669"/>
    <property type="project" value="UniProtKB-UniRule"/>
</dbReference>
<dbReference type="GO" id="GO:0000287">
    <property type="term" value="F:magnesium ion binding"/>
    <property type="evidence" value="ECO:0007669"/>
    <property type="project" value="UniProtKB-UniRule"/>
</dbReference>
<dbReference type="GO" id="GO:0000155">
    <property type="term" value="F:phosphorelay sensor kinase activity"/>
    <property type="evidence" value="ECO:0007669"/>
    <property type="project" value="InterPro"/>
</dbReference>
<dbReference type="GO" id="GO:0004674">
    <property type="term" value="F:protein serine/threonine kinase activity"/>
    <property type="evidence" value="ECO:0007669"/>
    <property type="project" value="UniProtKB-KW"/>
</dbReference>
<dbReference type="GO" id="GO:0004712">
    <property type="term" value="F:protein serine/threonine/tyrosine kinase activity"/>
    <property type="evidence" value="ECO:0007669"/>
    <property type="project" value="UniProtKB-UniRule"/>
</dbReference>
<dbReference type="GO" id="GO:0006109">
    <property type="term" value="P:regulation of carbohydrate metabolic process"/>
    <property type="evidence" value="ECO:0007669"/>
    <property type="project" value="UniProtKB-UniRule"/>
</dbReference>
<dbReference type="CDD" id="cd01918">
    <property type="entry name" value="HprK_C"/>
    <property type="match status" value="1"/>
</dbReference>
<dbReference type="FunFam" id="3.40.50.300:FF:000174">
    <property type="entry name" value="HPr kinase/phosphorylase"/>
    <property type="match status" value="1"/>
</dbReference>
<dbReference type="Gene3D" id="3.40.1390.20">
    <property type="entry name" value="HprK N-terminal domain-like"/>
    <property type="match status" value="1"/>
</dbReference>
<dbReference type="Gene3D" id="3.40.50.300">
    <property type="entry name" value="P-loop containing nucleotide triphosphate hydrolases"/>
    <property type="match status" value="1"/>
</dbReference>
<dbReference type="HAMAP" id="MF_01249">
    <property type="entry name" value="HPr_kinase"/>
    <property type="match status" value="1"/>
</dbReference>
<dbReference type="InterPro" id="IPR003755">
    <property type="entry name" value="HPr(Ser)_kin/Pase"/>
</dbReference>
<dbReference type="InterPro" id="IPR011104">
    <property type="entry name" value="Hpr_kin/Pase_C"/>
</dbReference>
<dbReference type="InterPro" id="IPR011126">
    <property type="entry name" value="Hpr_kin/Pase_Hpr_N"/>
</dbReference>
<dbReference type="InterPro" id="IPR027417">
    <property type="entry name" value="P-loop_NTPase"/>
</dbReference>
<dbReference type="InterPro" id="IPR028979">
    <property type="entry name" value="Ser_kin/Pase_Hpr-like_N_sf"/>
</dbReference>
<dbReference type="NCBIfam" id="TIGR00679">
    <property type="entry name" value="hpr-ser"/>
    <property type="match status" value="1"/>
</dbReference>
<dbReference type="PANTHER" id="PTHR30305:SF1">
    <property type="entry name" value="HPR KINASE_PHOSPHORYLASE"/>
    <property type="match status" value="1"/>
</dbReference>
<dbReference type="PANTHER" id="PTHR30305">
    <property type="entry name" value="PROTEIN YJDM-RELATED"/>
    <property type="match status" value="1"/>
</dbReference>
<dbReference type="Pfam" id="PF07475">
    <property type="entry name" value="Hpr_kinase_C"/>
    <property type="match status" value="1"/>
</dbReference>
<dbReference type="Pfam" id="PF02603">
    <property type="entry name" value="Hpr_kinase_N"/>
    <property type="match status" value="1"/>
</dbReference>
<dbReference type="SUPFAM" id="SSF75138">
    <property type="entry name" value="HprK N-terminal domain-like"/>
    <property type="match status" value="1"/>
</dbReference>
<dbReference type="SUPFAM" id="SSF53795">
    <property type="entry name" value="PEP carboxykinase-like"/>
    <property type="match status" value="1"/>
</dbReference>
<protein>
    <recommendedName>
        <fullName evidence="1">HPr kinase/phosphorylase</fullName>
        <shortName evidence="1">HPrK/P</shortName>
        <ecNumber evidence="1">2.7.11.-</ecNumber>
        <ecNumber evidence="1">2.7.4.-</ecNumber>
    </recommendedName>
    <alternativeName>
        <fullName evidence="1">HPr(Ser) kinase/phosphorylase</fullName>
    </alternativeName>
</protein>
<evidence type="ECO:0000255" key="1">
    <source>
        <dbReference type="HAMAP-Rule" id="MF_01249"/>
    </source>
</evidence>
<organism>
    <name type="scientific">Clostridium perfringens (strain SM101 / Type A)</name>
    <dbReference type="NCBI Taxonomy" id="289380"/>
    <lineage>
        <taxon>Bacteria</taxon>
        <taxon>Bacillati</taxon>
        <taxon>Bacillota</taxon>
        <taxon>Clostridia</taxon>
        <taxon>Eubacteriales</taxon>
        <taxon>Clostridiaceae</taxon>
        <taxon>Clostridium</taxon>
    </lineage>
</organism>
<name>HPRK_CLOPS</name>
<gene>
    <name evidence="1" type="primary">hprK</name>
    <name type="ordered locus">CPR_1074</name>
</gene>